<keyword id="KW-0244">Early protein</keyword>
<gene>
    <name type="primary">E5</name>
</gene>
<organismHost>
    <name type="scientific">Homo sapiens</name>
    <name type="common">Human</name>
    <dbReference type="NCBI Taxonomy" id="9606"/>
</organismHost>
<protein>
    <recommendedName>
        <fullName>Probable protein E5A</fullName>
    </recommendedName>
</protein>
<feature type="chain" id="PRO_0000133308" description="Probable protein E5A">
    <location>
        <begin position="1"/>
        <end position="91"/>
    </location>
</feature>
<reference key="1">
    <citation type="journal article" date="1995" name="Virology">
        <title>Sequence determination of human papillomavirus type 6a and assembly of virus-like particles in Saccharomyces cerevisiae.</title>
        <authorList>
            <person name="Hofmann K.J."/>
            <person name="Cook J.C."/>
            <person name="Joyce J.G."/>
            <person name="Brown D.R."/>
            <person name="Schultz L.D."/>
            <person name="George H.A."/>
            <person name="Rosolowsky M."/>
            <person name="Fife K.H."/>
            <person name="Jansen K.U."/>
        </authorList>
    </citation>
    <scope>NUCLEOTIDE SEQUENCE [GENOMIC DNA]</scope>
</reference>
<accession>Q84296</accession>
<evidence type="ECO:0000305" key="1"/>
<proteinExistence type="inferred from homology"/>
<dbReference type="EMBL" id="L41216">
    <property type="protein sequence ID" value="AAA74216.1"/>
    <property type="molecule type" value="Genomic_DNA"/>
</dbReference>
<dbReference type="SMR" id="Q84296"/>
<dbReference type="Proteomes" id="UP000007675">
    <property type="component" value="Genome"/>
</dbReference>
<dbReference type="InterPro" id="IPR004270">
    <property type="entry name" value="Papilloma_E5_alpha"/>
</dbReference>
<dbReference type="Pfam" id="PF03025">
    <property type="entry name" value="Papilloma_E5"/>
    <property type="match status" value="1"/>
</dbReference>
<comment type="similarity">
    <text evidence="1">Belongs to the papillomaviridae E5A protein family.</text>
</comment>
<name>VE5A_HPV6A</name>
<sequence>MEVVPVQIAAGTTSTLILPVIIAFVVCFVSIILIVWISDFIVYTSVLVLTLLLYLLLWLLLTTPLQFFLLTLLVCYCPALYIHHYIVNTQQ</sequence>
<organism>
    <name type="scientific">Human papillomavirus type 6a</name>
    <dbReference type="NCBI Taxonomy" id="37122"/>
    <lineage>
        <taxon>Viruses</taxon>
        <taxon>Monodnaviria</taxon>
        <taxon>Shotokuvirae</taxon>
        <taxon>Cossaviricota</taxon>
        <taxon>Papovaviricetes</taxon>
        <taxon>Zurhausenvirales</taxon>
        <taxon>Papillomaviridae</taxon>
        <taxon>Firstpapillomavirinae</taxon>
        <taxon>Alphapapillomavirus</taxon>
        <taxon>Alphapapillomavirus 10</taxon>
    </lineage>
</organism>